<keyword id="KW-0687">Ribonucleoprotein</keyword>
<keyword id="KW-0689">Ribosomal protein</keyword>
<reference key="1">
    <citation type="journal article" date="2006" name="Genome Res.">
        <title>Massive genome erosion and functional adaptations provide insights into the symbiotic lifestyle of Sodalis glossinidius in the tsetse host.</title>
        <authorList>
            <person name="Toh H."/>
            <person name="Weiss B.L."/>
            <person name="Perkin S.A.H."/>
            <person name="Yamashita A."/>
            <person name="Oshima K."/>
            <person name="Hattori M."/>
            <person name="Aksoy S."/>
        </authorList>
    </citation>
    <scope>NUCLEOTIDE SEQUENCE [LARGE SCALE GENOMIC DNA]</scope>
    <source>
        <strain>morsitans</strain>
    </source>
</reference>
<accession>Q2NVK1</accession>
<protein>
    <recommendedName>
        <fullName evidence="1">Large ribosomal subunit protein bL19</fullName>
    </recommendedName>
    <alternativeName>
        <fullName evidence="2">50S ribosomal protein L19</fullName>
    </alternativeName>
</protein>
<sequence>MSNIIKQIEQEQMKQNVPSFRPGDSVEVKVWVVEGSKKRLQAFEGVVIAIRNRGLHSAFTVRKISNGEGVERVFQTHSPVIDSITVKRRGAVRQAKLYYLRERTGKAARIKERLN</sequence>
<proteinExistence type="inferred from homology"/>
<gene>
    <name evidence="1" type="primary">rplS</name>
    <name type="ordered locus">SG0549</name>
</gene>
<feature type="chain" id="PRO_0000252544" description="Large ribosomal subunit protein bL19">
    <location>
        <begin position="1"/>
        <end position="115"/>
    </location>
</feature>
<name>RL19_SODGM</name>
<dbReference type="EMBL" id="AP008232">
    <property type="protein sequence ID" value="BAE73824.1"/>
    <property type="molecule type" value="Genomic_DNA"/>
</dbReference>
<dbReference type="RefSeq" id="WP_011410302.1">
    <property type="nucleotide sequence ID" value="NC_007712.1"/>
</dbReference>
<dbReference type="SMR" id="Q2NVK1"/>
<dbReference type="STRING" id="343509.SG0549"/>
<dbReference type="KEGG" id="sgl:SG0549"/>
<dbReference type="eggNOG" id="COG0335">
    <property type="taxonomic scope" value="Bacteria"/>
</dbReference>
<dbReference type="HOGENOM" id="CLU_103507_2_1_6"/>
<dbReference type="OrthoDB" id="9803541at2"/>
<dbReference type="Proteomes" id="UP000001932">
    <property type="component" value="Chromosome"/>
</dbReference>
<dbReference type="GO" id="GO:0022625">
    <property type="term" value="C:cytosolic large ribosomal subunit"/>
    <property type="evidence" value="ECO:0007669"/>
    <property type="project" value="TreeGrafter"/>
</dbReference>
<dbReference type="GO" id="GO:0003735">
    <property type="term" value="F:structural constituent of ribosome"/>
    <property type="evidence" value="ECO:0007669"/>
    <property type="project" value="InterPro"/>
</dbReference>
<dbReference type="GO" id="GO:0006412">
    <property type="term" value="P:translation"/>
    <property type="evidence" value="ECO:0007669"/>
    <property type="project" value="UniProtKB-UniRule"/>
</dbReference>
<dbReference type="FunFam" id="2.30.30.790:FF:000001">
    <property type="entry name" value="50S ribosomal protein L19"/>
    <property type="match status" value="1"/>
</dbReference>
<dbReference type="Gene3D" id="2.30.30.790">
    <property type="match status" value="1"/>
</dbReference>
<dbReference type="HAMAP" id="MF_00402">
    <property type="entry name" value="Ribosomal_bL19"/>
    <property type="match status" value="1"/>
</dbReference>
<dbReference type="InterPro" id="IPR001857">
    <property type="entry name" value="Ribosomal_bL19"/>
</dbReference>
<dbReference type="InterPro" id="IPR018257">
    <property type="entry name" value="Ribosomal_bL19_CS"/>
</dbReference>
<dbReference type="InterPro" id="IPR038657">
    <property type="entry name" value="Ribosomal_bL19_sf"/>
</dbReference>
<dbReference type="InterPro" id="IPR008991">
    <property type="entry name" value="Translation_prot_SH3-like_sf"/>
</dbReference>
<dbReference type="NCBIfam" id="TIGR01024">
    <property type="entry name" value="rplS_bact"/>
    <property type="match status" value="1"/>
</dbReference>
<dbReference type="PANTHER" id="PTHR15680:SF9">
    <property type="entry name" value="LARGE RIBOSOMAL SUBUNIT PROTEIN BL19M"/>
    <property type="match status" value="1"/>
</dbReference>
<dbReference type="PANTHER" id="PTHR15680">
    <property type="entry name" value="RIBOSOMAL PROTEIN L19"/>
    <property type="match status" value="1"/>
</dbReference>
<dbReference type="Pfam" id="PF01245">
    <property type="entry name" value="Ribosomal_L19"/>
    <property type="match status" value="1"/>
</dbReference>
<dbReference type="PIRSF" id="PIRSF002191">
    <property type="entry name" value="Ribosomal_L19"/>
    <property type="match status" value="1"/>
</dbReference>
<dbReference type="PRINTS" id="PR00061">
    <property type="entry name" value="RIBOSOMALL19"/>
</dbReference>
<dbReference type="SUPFAM" id="SSF50104">
    <property type="entry name" value="Translation proteins SH3-like domain"/>
    <property type="match status" value="1"/>
</dbReference>
<dbReference type="PROSITE" id="PS01015">
    <property type="entry name" value="RIBOSOMAL_L19"/>
    <property type="match status" value="1"/>
</dbReference>
<comment type="function">
    <text evidence="1">This protein is located at the 30S-50S ribosomal subunit interface and may play a role in the structure and function of the aminoacyl-tRNA binding site.</text>
</comment>
<comment type="similarity">
    <text evidence="1">Belongs to the bacterial ribosomal protein bL19 family.</text>
</comment>
<organism>
    <name type="scientific">Sodalis glossinidius (strain morsitans)</name>
    <dbReference type="NCBI Taxonomy" id="343509"/>
    <lineage>
        <taxon>Bacteria</taxon>
        <taxon>Pseudomonadati</taxon>
        <taxon>Pseudomonadota</taxon>
        <taxon>Gammaproteobacteria</taxon>
        <taxon>Enterobacterales</taxon>
        <taxon>Bruguierivoracaceae</taxon>
        <taxon>Sodalis</taxon>
    </lineage>
</organism>
<evidence type="ECO:0000255" key="1">
    <source>
        <dbReference type="HAMAP-Rule" id="MF_00402"/>
    </source>
</evidence>
<evidence type="ECO:0000305" key="2"/>